<organism>
    <name type="scientific">Canary circovirus</name>
    <name type="common">CaCV</name>
    <dbReference type="NCBI Taxonomy" id="142661"/>
    <lineage>
        <taxon>Viruses</taxon>
        <taxon>Monodnaviria</taxon>
        <taxon>Shotokuvirae</taxon>
        <taxon>Cressdnaviricota</taxon>
        <taxon>Arfiviricetes</taxon>
        <taxon>Cirlivirales</taxon>
        <taxon>Circoviridae</taxon>
        <taxon>Circovirus</taxon>
        <taxon>Circovirus canary</taxon>
    </lineage>
</organism>
<keyword id="KW-0067">ATP-binding</keyword>
<keyword id="KW-0190">Covalent protein-DNA linkage</keyword>
<keyword id="KW-0235">DNA replication</keyword>
<keyword id="KW-0238">DNA-binding</keyword>
<keyword id="KW-0255">Endonuclease</keyword>
<keyword id="KW-0347">Helicase</keyword>
<keyword id="KW-1048">Host nucleus</keyword>
<keyword id="KW-0378">Hydrolase</keyword>
<keyword id="KW-0479">Metal-binding</keyword>
<keyword id="KW-0511">Multifunctional enzyme</keyword>
<keyword id="KW-0540">Nuclease</keyword>
<keyword id="KW-0547">Nucleotide-binding</keyword>
<keyword id="KW-0548">Nucleotidyltransferase</keyword>
<keyword id="KW-1185">Reference proteome</keyword>
<keyword id="KW-0808">Transferase</keyword>
<feature type="chain" id="PRO_0000319863" description="Replication-associated protein">
    <location>
        <begin position="1"/>
        <end position="290"/>
    </location>
</feature>
<feature type="domain" description="CRESS-DNA virus Rep endonuclease" evidence="3">
    <location>
        <begin position="6"/>
        <end position="103"/>
    </location>
</feature>
<feature type="short sequence motif" description="Nuclear localization signal" evidence="2">
    <location>
        <begin position="4"/>
        <end position="13"/>
    </location>
</feature>
<feature type="short sequence motif" description="RCR-1" evidence="3">
    <location>
        <begin position="13"/>
        <end position="16"/>
    </location>
</feature>
<feature type="short sequence motif" description="RCR-2" evidence="3">
    <location>
        <begin position="51"/>
        <end position="53"/>
    </location>
</feature>
<feature type="short sequence motif" description="Nuclear localization signal" evidence="2">
    <location>
        <begin position="60"/>
        <end position="80"/>
    </location>
</feature>
<feature type="short sequence motif" description="RCR-3" evidence="3">
    <location>
        <begin position="89"/>
        <end position="92"/>
    </location>
</feature>
<feature type="active site" description="For DNA cleavage activity" evidence="3">
    <location>
        <position position="89"/>
    </location>
</feature>
<feature type="binding site" evidence="2">
    <location>
        <position position="43"/>
    </location>
    <ligand>
        <name>a divalent metal cation</name>
        <dbReference type="ChEBI" id="CHEBI:60240"/>
    </ligand>
</feature>
<feature type="binding site" evidence="2">
    <location>
        <position position="51"/>
    </location>
    <ligand>
        <name>a divalent metal cation</name>
        <dbReference type="ChEBI" id="CHEBI:60240"/>
    </ligand>
</feature>
<feature type="binding site" evidence="2">
    <location>
        <position position="93"/>
    </location>
    <ligand>
        <name>a divalent metal cation</name>
        <dbReference type="ChEBI" id="CHEBI:60240"/>
    </ligand>
</feature>
<feature type="binding site" evidence="1">
    <location>
        <begin position="165"/>
        <end position="172"/>
    </location>
    <ligand>
        <name>ATP</name>
        <dbReference type="ChEBI" id="CHEBI:30616"/>
    </ligand>
</feature>
<reference key="1">
    <citation type="journal article" date="2001" name="Avian Pathol.">
        <title>Nucleotide sequence-based identification of a novel circovirus of canaries.</title>
        <authorList>
            <person name="Todd D."/>
            <person name="Weston J."/>
            <person name="Ball N.W."/>
            <person name="Borghmans B.J."/>
            <person name="Smyth J.A."/>
            <person name="Gelmini L."/>
            <person name="Lavazza A."/>
        </authorList>
    </citation>
    <scope>NUCLEOTIDE SEQUENCE [GENOMIC DNA]</scope>
</reference>
<gene>
    <name type="primary">Rep</name>
    <name type="ORF">ORF1</name>
</gene>
<sequence length="290" mass="33372">MAPVRAAAAKRWCFTLNNYTAEEEAKVRALLPGEFHFAICGKERGEQGTPHLQGFLHFKKKQRLSALKKLLARAHWEKARGSDHDNEEYCSKENDVILTIGEPVQGNRSDLAGAVAAVKAGRRMVDIAREFSEIYVKYGRGLRDLALMIGQKPRDFKTEVVVITGPSGVGKSRLASEMEGSKFYKMKGDWWDGYSNEDIVIMDDFYGWLPFCEMLRLMDRYPHKVPVKGSYVEFTSKKIVITSNTHPESWYCPDKCYLPALFRRINKWMYWDGLRFEDVPDAMKKHPINY</sequence>
<comment type="function">
    <text evidence="1">Essential for the replication of viral ssDNA. The closed circular ssDNA genome is first converted to a superhelical dsDNA. Rep and/or Rep' binds a specific hairpin at the genome origin of replication. Introduces an endonucleolytic nick within the conserved sequence 5'-AGTATTAC-3' in the intergenic region of the genome, thereby initiating the rolling circle replication (RCR). Following cleavage, binds covalently to the 5'-phosphate of DNA as a tyrosyl ester. The cleavage gives rise to a free 3'-OH that serves as a primer for the cellular DNA polymerase. The polymerase synthesizes the (+) strand DNA by rolling circle mechanism. After one round of replication, a Rep-catalyzed nucleotidyl transfer reaction releases a circular single-stranded virus genome, thereby terminating the replication. Displays origin-specific DNA cleavage, nucleotidyl transferase, ATPase and helicase activities. ATPase activity is probably carried by the isoform Rep (By similarity).</text>
</comment>
<comment type="catalytic activity">
    <reaction>
        <text>ATP + H2O = ADP + phosphate + H(+)</text>
        <dbReference type="Rhea" id="RHEA:13065"/>
        <dbReference type="ChEBI" id="CHEBI:15377"/>
        <dbReference type="ChEBI" id="CHEBI:15378"/>
        <dbReference type="ChEBI" id="CHEBI:30616"/>
        <dbReference type="ChEBI" id="CHEBI:43474"/>
        <dbReference type="ChEBI" id="CHEBI:456216"/>
    </reaction>
</comment>
<comment type="cofactor">
    <cofactor evidence="1">
        <name>Mg(2+)</name>
        <dbReference type="ChEBI" id="CHEBI:18420"/>
    </cofactor>
    <cofactor evidence="1">
        <name>Mn(2+)</name>
        <dbReference type="ChEBI" id="CHEBI:29035"/>
    </cofactor>
    <text evidence="1">Divalent metal cations, possibly Mg(2+) or Mn(2+).</text>
</comment>
<comment type="subunit">
    <text evidence="1">Interacts with the capsid protein; this interaction relocates Rep into the nucleus.</text>
</comment>
<comment type="subcellular location">
    <subcellularLocation>
        <location evidence="4">Host nucleus</location>
    </subcellularLocation>
</comment>
<comment type="domain">
    <text>There are 3 rolling circle replication (RCR) motifs. RCR-2 is probably involved in metal coordination. RCR-3 is required for phosphodiester bond cleavage for initiation of RCR.</text>
</comment>
<comment type="similarity">
    <text evidence="4">Belongs to the nanoviruses/circoviruses replication-associated protein family.</text>
</comment>
<accession>Q912W1</accession>
<proteinExistence type="inferred from homology"/>
<organismHost>
    <name type="scientific">Serinus</name>
    <dbReference type="NCBI Taxonomy" id="9134"/>
</organismHost>
<protein>
    <recommendedName>
        <fullName>Replication-associated protein</fullName>
        <ecNumber>2.7.7.-</ecNumber>
        <ecNumber>3.1.21.-</ecNumber>
        <ecNumber>3.6.1.-</ecNumber>
    </recommendedName>
    <alternativeName>
        <fullName>ATP-dependent helicase Rep</fullName>
    </alternativeName>
    <alternativeName>
        <fullName>RepP</fullName>
    </alternativeName>
</protein>
<name>REP_CACV</name>
<evidence type="ECO:0000250" key="1"/>
<evidence type="ECO:0000255" key="2"/>
<evidence type="ECO:0000255" key="3">
    <source>
        <dbReference type="PROSITE-ProRule" id="PRU01364"/>
    </source>
</evidence>
<evidence type="ECO:0000305" key="4"/>
<dbReference type="EC" id="2.7.7.-"/>
<dbReference type="EC" id="3.1.21.-"/>
<dbReference type="EC" id="3.6.1.-"/>
<dbReference type="EMBL" id="AJ301633">
    <property type="protein sequence ID" value="CAC44748.2"/>
    <property type="molecule type" value="Genomic_DNA"/>
</dbReference>
<dbReference type="RefSeq" id="NP_573442.1">
    <property type="nucleotide sequence ID" value="NC_003410.1"/>
</dbReference>
<dbReference type="SMR" id="Q912W1"/>
<dbReference type="GeneID" id="935131"/>
<dbReference type="KEGG" id="vg:935131"/>
<dbReference type="OrthoDB" id="9195at10239"/>
<dbReference type="Proteomes" id="UP000007621">
    <property type="component" value="Genome"/>
</dbReference>
<dbReference type="GO" id="GO:0042025">
    <property type="term" value="C:host cell nucleus"/>
    <property type="evidence" value="ECO:0007669"/>
    <property type="project" value="UniProtKB-SubCell"/>
</dbReference>
<dbReference type="GO" id="GO:0005524">
    <property type="term" value="F:ATP binding"/>
    <property type="evidence" value="ECO:0007669"/>
    <property type="project" value="UniProtKB-KW"/>
</dbReference>
<dbReference type="GO" id="GO:0016887">
    <property type="term" value="F:ATP hydrolysis activity"/>
    <property type="evidence" value="ECO:0007669"/>
    <property type="project" value="RHEA"/>
</dbReference>
<dbReference type="GO" id="GO:0003677">
    <property type="term" value="F:DNA binding"/>
    <property type="evidence" value="ECO:0007669"/>
    <property type="project" value="UniProtKB-KW"/>
</dbReference>
<dbReference type="GO" id="GO:0004519">
    <property type="term" value="F:endonuclease activity"/>
    <property type="evidence" value="ECO:0007669"/>
    <property type="project" value="UniProtKB-KW"/>
</dbReference>
<dbReference type="GO" id="GO:0046872">
    <property type="term" value="F:metal ion binding"/>
    <property type="evidence" value="ECO:0007669"/>
    <property type="project" value="UniProtKB-KW"/>
</dbReference>
<dbReference type="GO" id="GO:0016779">
    <property type="term" value="F:nucleotidyltransferase activity"/>
    <property type="evidence" value="ECO:0007669"/>
    <property type="project" value="UniProtKB-KW"/>
</dbReference>
<dbReference type="GO" id="GO:0003723">
    <property type="term" value="F:RNA binding"/>
    <property type="evidence" value="ECO:0007669"/>
    <property type="project" value="InterPro"/>
</dbReference>
<dbReference type="GO" id="GO:0003724">
    <property type="term" value="F:RNA helicase activity"/>
    <property type="evidence" value="ECO:0007669"/>
    <property type="project" value="InterPro"/>
</dbReference>
<dbReference type="GO" id="GO:0006260">
    <property type="term" value="P:DNA replication"/>
    <property type="evidence" value="ECO:0007669"/>
    <property type="project" value="UniProtKB-KW"/>
</dbReference>
<dbReference type="Gene3D" id="3.40.1310.20">
    <property type="match status" value="1"/>
</dbReference>
<dbReference type="InterPro" id="IPR049912">
    <property type="entry name" value="CRESS_DNA_REP"/>
</dbReference>
<dbReference type="InterPro" id="IPR000605">
    <property type="entry name" value="Helicase_SF3_ssDNA/RNA_vir"/>
</dbReference>
<dbReference type="InterPro" id="IPR027417">
    <property type="entry name" value="P-loop_NTPase"/>
</dbReference>
<dbReference type="Pfam" id="PF00910">
    <property type="entry name" value="RNA_helicase"/>
    <property type="match status" value="1"/>
</dbReference>
<dbReference type="Pfam" id="PF02407">
    <property type="entry name" value="Viral_Rep"/>
    <property type="match status" value="1"/>
</dbReference>
<dbReference type="SUPFAM" id="SSF52540">
    <property type="entry name" value="P-loop containing nucleoside triphosphate hydrolases"/>
    <property type="match status" value="1"/>
</dbReference>
<dbReference type="PROSITE" id="PS52020">
    <property type="entry name" value="CRESS_DNA_REP"/>
    <property type="match status" value="1"/>
</dbReference>